<keyword id="KW-0143">Chaperone</keyword>
<keyword id="KW-0963">Cytoplasm</keyword>
<keyword id="KW-1015">Disulfide bond</keyword>
<keyword id="KW-0676">Redox-active center</keyword>
<keyword id="KW-0862">Zinc</keyword>
<evidence type="ECO:0000255" key="1">
    <source>
        <dbReference type="HAMAP-Rule" id="MF_00117"/>
    </source>
</evidence>
<proteinExistence type="inferred from homology"/>
<dbReference type="EMBL" id="AJ938182">
    <property type="protein sequence ID" value="CAI80149.1"/>
    <property type="molecule type" value="Genomic_DNA"/>
</dbReference>
<dbReference type="RefSeq" id="WP_000148605.1">
    <property type="nucleotide sequence ID" value="NC_007622.1"/>
</dbReference>
<dbReference type="SMR" id="Q2YVX3"/>
<dbReference type="KEGG" id="sab:SAB0461"/>
<dbReference type="HOGENOM" id="CLU_054493_1_0_9"/>
<dbReference type="GO" id="GO:0005737">
    <property type="term" value="C:cytoplasm"/>
    <property type="evidence" value="ECO:0007669"/>
    <property type="project" value="UniProtKB-SubCell"/>
</dbReference>
<dbReference type="GO" id="GO:0044183">
    <property type="term" value="F:protein folding chaperone"/>
    <property type="evidence" value="ECO:0007669"/>
    <property type="project" value="TreeGrafter"/>
</dbReference>
<dbReference type="GO" id="GO:0051082">
    <property type="term" value="F:unfolded protein binding"/>
    <property type="evidence" value="ECO:0007669"/>
    <property type="project" value="UniProtKB-UniRule"/>
</dbReference>
<dbReference type="GO" id="GO:0042026">
    <property type="term" value="P:protein refolding"/>
    <property type="evidence" value="ECO:0007669"/>
    <property type="project" value="TreeGrafter"/>
</dbReference>
<dbReference type="CDD" id="cd00498">
    <property type="entry name" value="Hsp33"/>
    <property type="match status" value="1"/>
</dbReference>
<dbReference type="Gene3D" id="3.55.30.10">
    <property type="entry name" value="Hsp33 domain"/>
    <property type="match status" value="1"/>
</dbReference>
<dbReference type="Gene3D" id="3.90.1280.10">
    <property type="entry name" value="HSP33 redox switch-like"/>
    <property type="match status" value="1"/>
</dbReference>
<dbReference type="HAMAP" id="MF_00117">
    <property type="entry name" value="HslO"/>
    <property type="match status" value="1"/>
</dbReference>
<dbReference type="InterPro" id="IPR000397">
    <property type="entry name" value="Heat_shock_Hsp33"/>
</dbReference>
<dbReference type="InterPro" id="IPR016154">
    <property type="entry name" value="Heat_shock_Hsp33_C"/>
</dbReference>
<dbReference type="InterPro" id="IPR016153">
    <property type="entry name" value="Heat_shock_Hsp33_N"/>
</dbReference>
<dbReference type="NCBIfam" id="NF001033">
    <property type="entry name" value="PRK00114.1"/>
    <property type="match status" value="1"/>
</dbReference>
<dbReference type="PANTHER" id="PTHR30111">
    <property type="entry name" value="33 KDA CHAPERONIN"/>
    <property type="match status" value="1"/>
</dbReference>
<dbReference type="PANTHER" id="PTHR30111:SF1">
    <property type="entry name" value="33 KDA CHAPERONIN"/>
    <property type="match status" value="1"/>
</dbReference>
<dbReference type="Pfam" id="PF01430">
    <property type="entry name" value="HSP33"/>
    <property type="match status" value="1"/>
</dbReference>
<dbReference type="PIRSF" id="PIRSF005261">
    <property type="entry name" value="Heat_shock_Hsp33"/>
    <property type="match status" value="1"/>
</dbReference>
<dbReference type="SUPFAM" id="SSF64397">
    <property type="entry name" value="Hsp33 domain"/>
    <property type="match status" value="1"/>
</dbReference>
<dbReference type="SUPFAM" id="SSF118352">
    <property type="entry name" value="HSP33 redox switch-like"/>
    <property type="match status" value="1"/>
</dbReference>
<reference key="1">
    <citation type="journal article" date="2007" name="PLoS ONE">
        <title>Molecular correlates of host specialization in Staphylococcus aureus.</title>
        <authorList>
            <person name="Herron-Olson L."/>
            <person name="Fitzgerald J.R."/>
            <person name="Musser J.M."/>
            <person name="Kapur V."/>
        </authorList>
    </citation>
    <scope>NUCLEOTIDE SEQUENCE [LARGE SCALE GENOMIC DNA]</scope>
    <source>
        <strain>bovine RF122 / ET3-1</strain>
    </source>
</reference>
<protein>
    <recommendedName>
        <fullName evidence="1">33 kDa chaperonin</fullName>
    </recommendedName>
    <alternativeName>
        <fullName evidence="1">Heat shock protein 33 homolog</fullName>
        <shortName evidence="1">HSP33</shortName>
    </alternativeName>
</protein>
<organism>
    <name type="scientific">Staphylococcus aureus (strain bovine RF122 / ET3-1)</name>
    <dbReference type="NCBI Taxonomy" id="273036"/>
    <lineage>
        <taxon>Bacteria</taxon>
        <taxon>Bacillati</taxon>
        <taxon>Bacillota</taxon>
        <taxon>Bacilli</taxon>
        <taxon>Bacillales</taxon>
        <taxon>Staphylococcaceae</taxon>
        <taxon>Staphylococcus</taxon>
    </lineage>
</organism>
<comment type="function">
    <text evidence="1">Redox regulated molecular chaperone. Protects both thermally unfolding and oxidatively damaged proteins from irreversible aggregation. Plays an important role in the bacterial defense system toward oxidative stress.</text>
</comment>
<comment type="subcellular location">
    <subcellularLocation>
        <location evidence="1">Cytoplasm</location>
    </subcellularLocation>
</comment>
<comment type="PTM">
    <text evidence="1">Under oxidizing conditions two disulfide bonds are formed involving the reactive cysteines. Under reducing conditions zinc is bound to the reactive cysteines and the protein is inactive.</text>
</comment>
<comment type="similarity">
    <text evidence="1">Belongs to the HSP33 family.</text>
</comment>
<name>HSLO_STAAB</name>
<gene>
    <name evidence="1" type="primary">hslO</name>
    <name type="ordered locus">SAB0461</name>
</gene>
<sequence length="293" mass="31822">MTHDYIVKALAFDGEIRAYAALTTETVQEAQTRHYTWPTASAAMGRTMTATAMMGAMLKGDQKLTVTVDGQGPIGRIIADANAKGEVRAYVDHPQTHFPLNEQGKLDVRRAVGTNGSIMVVKDVGMKDYFSGASPIVSGELGEDFTYYYATSEQTPSSVGLGVLVNPDNTIKAAGGFIIQVMPGAKDETISKLEKAISEMTPVSKLIEQGLTPEGLLNEILGEDHVQILEKMPVQFECNCSHEKFLNAIKGLGEAEIQNMIKEDHGAEAVCHFCGNKYKYTEEELNVLLESLA</sequence>
<accession>Q2YVX3</accession>
<feature type="chain" id="PRO_0000238093" description="33 kDa chaperonin">
    <location>
        <begin position="1"/>
        <end position="293"/>
    </location>
</feature>
<feature type="disulfide bond" description="Redox-active" evidence="1">
    <location>
        <begin position="238"/>
        <end position="240"/>
    </location>
</feature>
<feature type="disulfide bond" description="Redox-active" evidence="1">
    <location>
        <begin position="271"/>
        <end position="274"/>
    </location>
</feature>